<accession>A2T316</accession>
<sequence>MNLEIVAQLTVLALIVVSGPLVIALLAVRKGNL</sequence>
<organism>
    <name type="scientific">Angiopteris evecta</name>
    <name type="common">Mule's foot fern</name>
    <name type="synonym">Polypodium evectum</name>
    <dbReference type="NCBI Taxonomy" id="13825"/>
    <lineage>
        <taxon>Eukaryota</taxon>
        <taxon>Viridiplantae</taxon>
        <taxon>Streptophyta</taxon>
        <taxon>Embryophyta</taxon>
        <taxon>Tracheophyta</taxon>
        <taxon>Polypodiopsida</taxon>
        <taxon>Marattiidae</taxon>
        <taxon>Marattiales</taxon>
        <taxon>Marattiaceae</taxon>
        <taxon>Angiopteris</taxon>
    </lineage>
</organism>
<proteinExistence type="inferred from homology"/>
<reference key="1">
    <citation type="journal article" date="2007" name="Am. Fern J.">
        <title>The complete plastid genome sequence of Angiopteris evecta (G. Forst.) Hoffm. (Marattiaceae).</title>
        <authorList>
            <person name="Roper J.M."/>
            <person name="Hansen S.K."/>
            <person name="Wolf P.G."/>
            <person name="Karol K.G."/>
            <person name="Mandoli D.F."/>
            <person name="Everett K.D.E."/>
            <person name="Kuehl J.V."/>
            <person name="Boore J.L."/>
        </authorList>
    </citation>
    <scope>NUCLEOTIDE SEQUENCE [LARGE SCALE GENOMIC DNA]</scope>
</reference>
<name>PSB30_ANGEV</name>
<evidence type="ECO:0000255" key="1">
    <source>
        <dbReference type="HAMAP-Rule" id="MF_01329"/>
    </source>
</evidence>
<keyword id="KW-0150">Chloroplast</keyword>
<keyword id="KW-0472">Membrane</keyword>
<keyword id="KW-0602">Photosynthesis</keyword>
<keyword id="KW-0604">Photosystem II</keyword>
<keyword id="KW-0934">Plastid</keyword>
<keyword id="KW-0793">Thylakoid</keyword>
<keyword id="KW-0812">Transmembrane</keyword>
<keyword id="KW-1133">Transmembrane helix</keyword>
<protein>
    <recommendedName>
        <fullName evidence="1">Photosystem II reaction center protein Psb30</fullName>
    </recommendedName>
    <alternativeName>
        <fullName evidence="1">Photosystem II reaction center protein Ycf12</fullName>
    </alternativeName>
</protein>
<gene>
    <name evidence="1" type="primary">psb30</name>
    <name evidence="1" type="synonym">ycf12</name>
</gene>
<dbReference type="EMBL" id="DQ821119">
    <property type="protein sequence ID" value="ABG79583.1"/>
    <property type="molecule type" value="Genomic_DNA"/>
</dbReference>
<dbReference type="RefSeq" id="YP_001023684.1">
    <property type="nucleotide sequence ID" value="NC_008829.1"/>
</dbReference>
<dbReference type="SMR" id="A2T316"/>
<dbReference type="GeneID" id="4788225"/>
<dbReference type="GO" id="GO:0009535">
    <property type="term" value="C:chloroplast thylakoid membrane"/>
    <property type="evidence" value="ECO:0007669"/>
    <property type="project" value="UniProtKB-SubCell"/>
</dbReference>
<dbReference type="GO" id="GO:0009523">
    <property type="term" value="C:photosystem II"/>
    <property type="evidence" value="ECO:0007669"/>
    <property type="project" value="UniProtKB-KW"/>
</dbReference>
<dbReference type="GO" id="GO:0015979">
    <property type="term" value="P:photosynthesis"/>
    <property type="evidence" value="ECO:0007669"/>
    <property type="project" value="UniProtKB-KW"/>
</dbReference>
<dbReference type="HAMAP" id="MF_01329">
    <property type="entry name" value="PSII_Psb30_Ycf12"/>
    <property type="match status" value="1"/>
</dbReference>
<dbReference type="InterPro" id="IPR010284">
    <property type="entry name" value="PSII_Ycf12_core-subunit"/>
</dbReference>
<dbReference type="NCBIfam" id="NF010239">
    <property type="entry name" value="PRK13686.1"/>
    <property type="match status" value="1"/>
</dbReference>
<dbReference type="Pfam" id="PF05969">
    <property type="entry name" value="PSII_Ycf12"/>
    <property type="match status" value="1"/>
</dbReference>
<comment type="function">
    <text evidence="1">A core subunit of photosystem II (PSII), probably helps stabilize the reaction center.</text>
</comment>
<comment type="subunit">
    <text evidence="1">PSII is composed of 1 copy each of membrane proteins PsbA, PsbB, PsbC, PsbD, PsbE, PsbF, PsbH, PsbI, PsbJ, PsbK, PsbL, PsbM, PsbT, PsbX, PsbY, PsbZ, Psb30/Ycf12, peripheral proteins of the oxygen-evolving complex and a large number of cofactors. It forms dimeric complexes.</text>
</comment>
<comment type="subcellular location">
    <subcellularLocation>
        <location evidence="1">Plastid</location>
        <location evidence="1">Chloroplast thylakoid membrane</location>
        <topology evidence="1">Single-pass membrane protein</topology>
    </subcellularLocation>
</comment>
<comment type="similarity">
    <text evidence="1">Belongs to the Psb30/Ycf12 family.</text>
</comment>
<geneLocation type="chloroplast"/>
<feature type="chain" id="PRO_0000342350" description="Photosystem II reaction center protein Psb30">
    <location>
        <begin position="1"/>
        <end position="33"/>
    </location>
</feature>
<feature type="transmembrane region" description="Helical" evidence="1">
    <location>
        <begin position="5"/>
        <end position="25"/>
    </location>
</feature>